<protein>
    <recommendedName>
        <fullName evidence="1">Small ribosomal subunit protein uS15</fullName>
    </recommendedName>
    <alternativeName>
        <fullName evidence="2">30S ribosomal protein S15</fullName>
    </alternativeName>
</protein>
<sequence length="88" mass="10188">MITKEQKQQIIATFGSKPNDTGSAEVQIALLDSRIKDLTEHFKANKKDFHSRRGLIAMVNQRKSLLEYLKRSNLESYKKLIEKLGLRK</sequence>
<organism>
    <name type="scientific">Leptospira biflexa serovar Patoc (strain Patoc 1 / Ames)</name>
    <dbReference type="NCBI Taxonomy" id="355278"/>
    <lineage>
        <taxon>Bacteria</taxon>
        <taxon>Pseudomonadati</taxon>
        <taxon>Spirochaetota</taxon>
        <taxon>Spirochaetia</taxon>
        <taxon>Leptospirales</taxon>
        <taxon>Leptospiraceae</taxon>
        <taxon>Leptospira</taxon>
    </lineage>
</organism>
<proteinExistence type="inferred from homology"/>
<accession>B0SH21</accession>
<gene>
    <name evidence="1" type="primary">rpsO</name>
    <name type="ordered locus">LBF_1475</name>
</gene>
<keyword id="KW-0687">Ribonucleoprotein</keyword>
<keyword id="KW-0689">Ribosomal protein</keyword>
<keyword id="KW-0694">RNA-binding</keyword>
<keyword id="KW-0699">rRNA-binding</keyword>
<name>RS15_LEPBA</name>
<dbReference type="EMBL" id="CP000777">
    <property type="protein sequence ID" value="ABZ93988.1"/>
    <property type="molecule type" value="Genomic_DNA"/>
</dbReference>
<dbReference type="RefSeq" id="WP_012388514.1">
    <property type="nucleotide sequence ID" value="NC_010842.1"/>
</dbReference>
<dbReference type="SMR" id="B0SH21"/>
<dbReference type="GeneID" id="93341454"/>
<dbReference type="KEGG" id="lbf:LBF_1475"/>
<dbReference type="HOGENOM" id="CLU_148518_0_0_12"/>
<dbReference type="GO" id="GO:0022627">
    <property type="term" value="C:cytosolic small ribosomal subunit"/>
    <property type="evidence" value="ECO:0007669"/>
    <property type="project" value="TreeGrafter"/>
</dbReference>
<dbReference type="GO" id="GO:0019843">
    <property type="term" value="F:rRNA binding"/>
    <property type="evidence" value="ECO:0007669"/>
    <property type="project" value="UniProtKB-UniRule"/>
</dbReference>
<dbReference type="GO" id="GO:0003735">
    <property type="term" value="F:structural constituent of ribosome"/>
    <property type="evidence" value="ECO:0007669"/>
    <property type="project" value="InterPro"/>
</dbReference>
<dbReference type="GO" id="GO:0006412">
    <property type="term" value="P:translation"/>
    <property type="evidence" value="ECO:0007669"/>
    <property type="project" value="UniProtKB-UniRule"/>
</dbReference>
<dbReference type="CDD" id="cd00353">
    <property type="entry name" value="Ribosomal_S15p_S13e"/>
    <property type="match status" value="1"/>
</dbReference>
<dbReference type="FunFam" id="1.10.287.10:FF:000002">
    <property type="entry name" value="30S ribosomal protein S15"/>
    <property type="match status" value="1"/>
</dbReference>
<dbReference type="Gene3D" id="6.10.250.3130">
    <property type="match status" value="1"/>
</dbReference>
<dbReference type="Gene3D" id="1.10.287.10">
    <property type="entry name" value="S15/NS1, RNA-binding"/>
    <property type="match status" value="1"/>
</dbReference>
<dbReference type="HAMAP" id="MF_01343_B">
    <property type="entry name" value="Ribosomal_uS15_B"/>
    <property type="match status" value="1"/>
</dbReference>
<dbReference type="InterPro" id="IPR000589">
    <property type="entry name" value="Ribosomal_uS15"/>
</dbReference>
<dbReference type="InterPro" id="IPR005290">
    <property type="entry name" value="Ribosomal_uS15_bac-type"/>
</dbReference>
<dbReference type="InterPro" id="IPR009068">
    <property type="entry name" value="uS15_NS1_RNA-bd_sf"/>
</dbReference>
<dbReference type="NCBIfam" id="TIGR00952">
    <property type="entry name" value="S15_bact"/>
    <property type="match status" value="1"/>
</dbReference>
<dbReference type="PANTHER" id="PTHR23321">
    <property type="entry name" value="RIBOSOMAL PROTEIN S15, BACTERIAL AND ORGANELLAR"/>
    <property type="match status" value="1"/>
</dbReference>
<dbReference type="PANTHER" id="PTHR23321:SF26">
    <property type="entry name" value="SMALL RIBOSOMAL SUBUNIT PROTEIN US15M"/>
    <property type="match status" value="1"/>
</dbReference>
<dbReference type="Pfam" id="PF00312">
    <property type="entry name" value="Ribosomal_S15"/>
    <property type="match status" value="1"/>
</dbReference>
<dbReference type="SMART" id="SM01387">
    <property type="entry name" value="Ribosomal_S15"/>
    <property type="match status" value="1"/>
</dbReference>
<dbReference type="SUPFAM" id="SSF47060">
    <property type="entry name" value="S15/NS1 RNA-binding domain"/>
    <property type="match status" value="1"/>
</dbReference>
<dbReference type="PROSITE" id="PS00362">
    <property type="entry name" value="RIBOSOMAL_S15"/>
    <property type="match status" value="1"/>
</dbReference>
<feature type="chain" id="PRO_1000143134" description="Small ribosomal subunit protein uS15">
    <location>
        <begin position="1"/>
        <end position="88"/>
    </location>
</feature>
<comment type="function">
    <text evidence="1">One of the primary rRNA binding proteins, it binds directly to 16S rRNA where it helps nucleate assembly of the platform of the 30S subunit by binding and bridging several RNA helices of the 16S rRNA.</text>
</comment>
<comment type="function">
    <text evidence="1">Forms an intersubunit bridge (bridge B4) with the 23S rRNA of the 50S subunit in the ribosome.</text>
</comment>
<comment type="subunit">
    <text evidence="1">Part of the 30S ribosomal subunit. Forms a bridge to the 50S subunit in the 70S ribosome, contacting the 23S rRNA.</text>
</comment>
<comment type="similarity">
    <text evidence="1">Belongs to the universal ribosomal protein uS15 family.</text>
</comment>
<evidence type="ECO:0000255" key="1">
    <source>
        <dbReference type="HAMAP-Rule" id="MF_01343"/>
    </source>
</evidence>
<evidence type="ECO:0000305" key="2"/>
<reference key="1">
    <citation type="journal article" date="2008" name="PLoS ONE">
        <title>Genome sequence of the saprophyte Leptospira biflexa provides insights into the evolution of Leptospira and the pathogenesis of leptospirosis.</title>
        <authorList>
            <person name="Picardeau M."/>
            <person name="Bulach D.M."/>
            <person name="Bouchier C."/>
            <person name="Zuerner R.L."/>
            <person name="Zidane N."/>
            <person name="Wilson P.J."/>
            <person name="Creno S."/>
            <person name="Kuczek E.S."/>
            <person name="Bommezzadri S."/>
            <person name="Davis J.C."/>
            <person name="McGrath A."/>
            <person name="Johnson M.J."/>
            <person name="Boursaux-Eude C."/>
            <person name="Seemann T."/>
            <person name="Rouy Z."/>
            <person name="Coppel R.L."/>
            <person name="Rood J.I."/>
            <person name="Lajus A."/>
            <person name="Davies J.K."/>
            <person name="Medigue C."/>
            <person name="Adler B."/>
        </authorList>
    </citation>
    <scope>NUCLEOTIDE SEQUENCE [LARGE SCALE GENOMIC DNA]</scope>
    <source>
        <strain>Patoc 1 / Ames</strain>
    </source>
</reference>